<name>NDB4S_OPICY</name>
<comment type="function">
    <molecule>Amphipathic peptide OcyC1</molecule>
    <text evidence="2 5">Antimicrobial peptide (By similarity) (PubMed:27917162). Inhibits the growth of Gram-positive and Gram-negative bacteria (By similarity). Shows antifungal activity with MIC values ranging from 12.5 to 25 uM (PubMed:27917162). Also shows an inhibitory activity on C.albicans biofilms at high concentrations (PubMed:27917162). Shows low cytotoxic activity and has weak hemolytic activity (PubMed:27917162).</text>
</comment>
<comment type="subcellular location">
    <subcellularLocation>
        <location evidence="4">Secreted</location>
    </subcellularLocation>
    <subcellularLocation>
        <location evidence="1">Target cell membrane</location>
    </subcellularLocation>
    <text evidence="1">Forms an alpha-helical membrane channel in the prey.</text>
</comment>
<comment type="tissue specificity">
    <text evidence="7">Expressed by the venom gland.</text>
</comment>
<comment type="mass spectrometry">
    <molecule>Amphipathic peptide OcyC1</molecule>
    <text>Monoisotopic mass.</text>
</comment>
<comment type="mass spectrometry">
    <molecule>OcyC1f</molecule>
</comment>
<comment type="miscellaneous">
    <text evidence="5">Negative results: does not show antifungal activity against Candida glabrata (ATCC90030) and Candida parapsilosis (ATCC22019) (MIC&gt;400 uM).</text>
</comment>
<comment type="similarity">
    <text evidence="7">Belongs to the non-disulfide-bridged peptide (NDBP) superfamily. Short antimicrobial peptide (group 4) family.</text>
</comment>
<proteinExistence type="evidence at protein level"/>
<protein>
    <recommendedName>
        <fullName evidence="6">Amphipathic peptide OcyC1</fullName>
    </recommendedName>
    <alternativeName>
        <fullName evidence="6">Non-disulfide-bridged peptide 5.7</fullName>
        <shortName evidence="6">NDBP-5.7</shortName>
    </alternativeName>
    <component>
        <recommendedName>
            <fullName evidence="3">OcyC1f</fullName>
        </recommendedName>
    </component>
</protein>
<evidence type="ECO:0000250" key="1"/>
<evidence type="ECO:0000250" key="2">
    <source>
        <dbReference type="UniProtKB" id="L0GCI6"/>
    </source>
</evidence>
<evidence type="ECO:0000250" key="3">
    <source>
        <dbReference type="UniProtKB" id="Q8MMJ7"/>
    </source>
</evidence>
<evidence type="ECO:0000269" key="4">
    <source>
    </source>
</evidence>
<evidence type="ECO:0000269" key="5">
    <source>
    </source>
</evidence>
<evidence type="ECO:0000303" key="6">
    <source>
    </source>
</evidence>
<evidence type="ECO:0000305" key="7"/>
<reference key="1">
    <citation type="journal article" date="2009" name="Toxicon">
        <title>Cloning and characterization of cDNA sequences encoding for new venom peptides of the Brazilian scorpion Opisthacanthus cayaporum.</title>
        <authorList>
            <person name="Silva E.C."/>
            <person name="Camargos T.S."/>
            <person name="Maranhao A.Q."/>
            <person name="Silva-Pereira I."/>
            <person name="Silva L.P."/>
            <person name="Possani L.D."/>
            <person name="Schwartz E.F."/>
        </authorList>
    </citation>
    <scope>NUCLEOTIDE SEQUENCE [MRNA]</scope>
    <scope>NOMENCLATURE</scope>
    <source>
        <tissue>Venom gland</tissue>
    </source>
</reference>
<reference key="2">
    <citation type="journal article" date="2008" name="Toxicon">
        <title>Mass spectrometry analysis, amino acid sequence and biological activity of venom components from the Brazilian scorpion Opisthacanthus cayaporum.</title>
        <authorList>
            <person name="Schwartz E.F."/>
            <person name="Camargos T.S."/>
            <person name="Zamudio F.Z."/>
            <person name="Silva L.P."/>
            <person name="Bloch C. Jr."/>
            <person name="Caixeta F."/>
            <person name="Schwartz C.A."/>
            <person name="Possani L.D."/>
        </authorList>
    </citation>
    <scope>MASS SPECTROMETRY</scope>
    <scope>SUBCELLULAR LOCATION</scope>
    <source>
        <tissue>Venom</tissue>
    </source>
</reference>
<reference key="3">
    <citation type="journal article" date="2016" name="Front. Microbiol.">
        <title>Activity of scorpion venom-derived antifungal peptides against planktonic cells of Candida spp. and Cryptococcus neoformans and Candida albicans biofilms.</title>
        <authorList>
            <person name="Guilhelmelli F."/>
            <person name="Vilela N."/>
            <person name="Smidt K.S."/>
            <person name="de Oliveira M.A."/>
            <person name="da Cunha Morales Alvares A."/>
            <person name="Rigonatto M.C."/>
            <person name="da Silva Costa P.H."/>
            <person name="Tavares A.H."/>
            <person name="de Freitas S.M."/>
            <person name="Nicola A.M."/>
            <person name="Franco O.L."/>
            <person name="Derengowski L.D."/>
            <person name="Schwartz E.F."/>
            <person name="Mortari M.R."/>
            <person name="Bocca A.L."/>
            <person name="Albuquerque P."/>
            <person name="Silva-Pereira I."/>
        </authorList>
    </citation>
    <scope>FUNCTION</scope>
    <scope>SYNTHESIS OF 24-36</scope>
</reference>
<keyword id="KW-0027">Amidation</keyword>
<keyword id="KW-0044">Antibiotic</keyword>
<keyword id="KW-0929">Antimicrobial</keyword>
<keyword id="KW-0295">Fungicide</keyword>
<keyword id="KW-0472">Membrane</keyword>
<keyword id="KW-0964">Secreted</keyword>
<keyword id="KW-0732">Signal</keyword>
<keyword id="KW-1052">Target cell membrane</keyword>
<keyword id="KW-1053">Target membrane</keyword>
<feature type="signal peptide" evidence="3">
    <location>
        <begin position="1"/>
        <end position="23"/>
    </location>
</feature>
<feature type="peptide" id="PRO_5000471230" description="Amphipathic peptide OcyC1">
    <location>
        <begin position="24"/>
        <end position="36"/>
    </location>
</feature>
<feature type="peptide" id="PRO_5000471229" description="OcyC1f" evidence="3">
    <location>
        <begin position="24"/>
        <end position="34"/>
    </location>
</feature>
<feature type="propeptide" id="PRO_0000398604">
    <location>
        <begin position="38"/>
        <end position="68"/>
    </location>
</feature>
<feature type="modified residue" description="Phenylalanine amide" evidence="3">
    <location>
        <position position="36"/>
    </location>
</feature>
<accession>C5J886</accession>
<dbReference type="EMBL" id="FM998743">
    <property type="protein sequence ID" value="CAX51390.1"/>
    <property type="molecule type" value="mRNA"/>
</dbReference>
<dbReference type="SMR" id="C5J886"/>
<dbReference type="GO" id="GO:0005576">
    <property type="term" value="C:extracellular region"/>
    <property type="evidence" value="ECO:0007669"/>
    <property type="project" value="UniProtKB-SubCell"/>
</dbReference>
<dbReference type="GO" id="GO:0016020">
    <property type="term" value="C:membrane"/>
    <property type="evidence" value="ECO:0007669"/>
    <property type="project" value="UniProtKB-KW"/>
</dbReference>
<dbReference type="GO" id="GO:0044218">
    <property type="term" value="C:other organism cell membrane"/>
    <property type="evidence" value="ECO:0007669"/>
    <property type="project" value="UniProtKB-KW"/>
</dbReference>
<dbReference type="GO" id="GO:0042742">
    <property type="term" value="P:defense response to bacterium"/>
    <property type="evidence" value="ECO:0007669"/>
    <property type="project" value="UniProtKB-KW"/>
</dbReference>
<dbReference type="GO" id="GO:0050832">
    <property type="term" value="P:defense response to fungus"/>
    <property type="evidence" value="ECO:0007669"/>
    <property type="project" value="UniProtKB-KW"/>
</dbReference>
<dbReference type="GO" id="GO:0031640">
    <property type="term" value="P:killing of cells of another organism"/>
    <property type="evidence" value="ECO:0007669"/>
    <property type="project" value="UniProtKB-KW"/>
</dbReference>
<organism>
    <name type="scientific">Opisthacanthus cayaporum</name>
    <name type="common">South American scorpion</name>
    <dbReference type="NCBI Taxonomy" id="573324"/>
    <lineage>
        <taxon>Eukaryota</taxon>
        <taxon>Metazoa</taxon>
        <taxon>Ecdysozoa</taxon>
        <taxon>Arthropoda</taxon>
        <taxon>Chelicerata</taxon>
        <taxon>Arachnida</taxon>
        <taxon>Scorpiones</taxon>
        <taxon>Iurida</taxon>
        <taxon>Scorpionoidea</taxon>
        <taxon>Hemiscorpiidae</taxon>
        <taxon>Opisthacanthus</taxon>
    </lineage>
</organism>
<sequence>MKAQLCILLIALVLFQTFSQSDAILSAIWSGIKSLFGRRGLNDLDDLDELFDGEISQADVDFLNELMR</sequence>